<accession>A6QG79</accession>
<reference key="1">
    <citation type="journal article" date="2008" name="J. Bacteriol.">
        <title>Genome sequence of Staphylococcus aureus strain Newman and comparative analysis of staphylococcal genomes: polymorphism and evolution of two major pathogenicity islands.</title>
        <authorList>
            <person name="Baba T."/>
            <person name="Bae T."/>
            <person name="Schneewind O."/>
            <person name="Takeuchi F."/>
            <person name="Hiramatsu K."/>
        </authorList>
    </citation>
    <scope>NUCLEOTIDE SEQUENCE [LARGE SCALE GENOMIC DNA]</scope>
    <source>
        <strain>Newman</strain>
    </source>
</reference>
<gene>
    <name evidence="1" type="primary">rsmH</name>
    <name type="synonym">mraW</name>
    <name type="ordered locus">NWMN_1089</name>
</gene>
<keyword id="KW-0963">Cytoplasm</keyword>
<keyword id="KW-0489">Methyltransferase</keyword>
<keyword id="KW-0698">rRNA processing</keyword>
<keyword id="KW-0949">S-adenosyl-L-methionine</keyword>
<keyword id="KW-0808">Transferase</keyword>
<proteinExistence type="inferred from homology"/>
<feature type="chain" id="PRO_0000387138" description="Ribosomal RNA small subunit methyltransferase H">
    <location>
        <begin position="1"/>
        <end position="311"/>
    </location>
</feature>
<feature type="binding site" evidence="1">
    <location>
        <begin position="32"/>
        <end position="34"/>
    </location>
    <ligand>
        <name>S-adenosyl-L-methionine</name>
        <dbReference type="ChEBI" id="CHEBI:59789"/>
    </ligand>
</feature>
<feature type="binding site" evidence="1">
    <location>
        <position position="52"/>
    </location>
    <ligand>
        <name>S-adenosyl-L-methionine</name>
        <dbReference type="ChEBI" id="CHEBI:59789"/>
    </ligand>
</feature>
<feature type="binding site" evidence="1">
    <location>
        <position position="79"/>
    </location>
    <ligand>
        <name>S-adenosyl-L-methionine</name>
        <dbReference type="ChEBI" id="CHEBI:59789"/>
    </ligand>
</feature>
<feature type="binding site" evidence="1">
    <location>
        <position position="100"/>
    </location>
    <ligand>
        <name>S-adenosyl-L-methionine</name>
        <dbReference type="ChEBI" id="CHEBI:59789"/>
    </ligand>
</feature>
<feature type="binding site" evidence="1">
    <location>
        <position position="107"/>
    </location>
    <ligand>
        <name>S-adenosyl-L-methionine</name>
        <dbReference type="ChEBI" id="CHEBI:59789"/>
    </ligand>
</feature>
<organism>
    <name type="scientific">Staphylococcus aureus (strain Newman)</name>
    <dbReference type="NCBI Taxonomy" id="426430"/>
    <lineage>
        <taxon>Bacteria</taxon>
        <taxon>Bacillati</taxon>
        <taxon>Bacillota</taxon>
        <taxon>Bacilli</taxon>
        <taxon>Bacillales</taxon>
        <taxon>Staphylococcaceae</taxon>
        <taxon>Staphylococcus</taxon>
    </lineage>
</organism>
<protein>
    <recommendedName>
        <fullName evidence="1">Ribosomal RNA small subunit methyltransferase H</fullName>
        <ecNumber evidence="1">2.1.1.199</ecNumber>
    </recommendedName>
    <alternativeName>
        <fullName evidence="1">16S rRNA m(4)C1402 methyltransferase</fullName>
    </alternativeName>
    <alternativeName>
        <fullName evidence="1">rRNA (cytosine-N(4)-)-methyltransferase RsmH</fullName>
    </alternativeName>
</protein>
<sequence length="311" mass="35710">MFHHISVMLNETIDYLNVKENGVYIDCTLGGAGHALYLLNQLNDDGRLIAIDQDQTAIDNAKEVLKDHLHRVTFVHSNFRELTQILKDLNIEKVDGIYYDLGVSSPQLDIPERGFSYHHDATLDMRMDQTQELTAYEIVNNWSYEALVKIFYRYGEEKFSKQIARRIEAHREQQPITTTLELVDIIKEGIPAKARRKGGHPAKRVFQALRIAVNDELSAFEDSIEQAIELVKVDGRISVITFHSLEDRLCKQVFQEYEKGPEVPRGLPVIPEAYTPKLKRVNRKPITATEEDLDDNNRARSAKLRVAEILK</sequence>
<evidence type="ECO:0000255" key="1">
    <source>
        <dbReference type="HAMAP-Rule" id="MF_01007"/>
    </source>
</evidence>
<comment type="function">
    <text evidence="1">Specifically methylates the N4 position of cytidine in position 1402 (C1402) of 16S rRNA.</text>
</comment>
<comment type="catalytic activity">
    <reaction evidence="1">
        <text>cytidine(1402) in 16S rRNA + S-adenosyl-L-methionine = N(4)-methylcytidine(1402) in 16S rRNA + S-adenosyl-L-homocysteine + H(+)</text>
        <dbReference type="Rhea" id="RHEA:42928"/>
        <dbReference type="Rhea" id="RHEA-COMP:10286"/>
        <dbReference type="Rhea" id="RHEA-COMP:10287"/>
        <dbReference type="ChEBI" id="CHEBI:15378"/>
        <dbReference type="ChEBI" id="CHEBI:57856"/>
        <dbReference type="ChEBI" id="CHEBI:59789"/>
        <dbReference type="ChEBI" id="CHEBI:74506"/>
        <dbReference type="ChEBI" id="CHEBI:82748"/>
        <dbReference type="EC" id="2.1.1.199"/>
    </reaction>
</comment>
<comment type="subcellular location">
    <subcellularLocation>
        <location evidence="1">Cytoplasm</location>
    </subcellularLocation>
</comment>
<comment type="similarity">
    <text evidence="1">Belongs to the methyltransferase superfamily. RsmH family.</text>
</comment>
<dbReference type="EC" id="2.1.1.199" evidence="1"/>
<dbReference type="EMBL" id="AP009351">
    <property type="protein sequence ID" value="BAF67361.1"/>
    <property type="molecule type" value="Genomic_DNA"/>
</dbReference>
<dbReference type="RefSeq" id="WP_000468389.1">
    <property type="nucleotide sequence ID" value="NZ_JBBIAE010000001.1"/>
</dbReference>
<dbReference type="SMR" id="A6QG79"/>
<dbReference type="KEGG" id="sae:NWMN_1089"/>
<dbReference type="HOGENOM" id="CLU_038422_2_0_9"/>
<dbReference type="Proteomes" id="UP000006386">
    <property type="component" value="Chromosome"/>
</dbReference>
<dbReference type="GO" id="GO:0005737">
    <property type="term" value="C:cytoplasm"/>
    <property type="evidence" value="ECO:0007669"/>
    <property type="project" value="UniProtKB-SubCell"/>
</dbReference>
<dbReference type="GO" id="GO:0071424">
    <property type="term" value="F:rRNA (cytosine-N4-)-methyltransferase activity"/>
    <property type="evidence" value="ECO:0007669"/>
    <property type="project" value="UniProtKB-UniRule"/>
</dbReference>
<dbReference type="GO" id="GO:0070475">
    <property type="term" value="P:rRNA base methylation"/>
    <property type="evidence" value="ECO:0007669"/>
    <property type="project" value="UniProtKB-UniRule"/>
</dbReference>
<dbReference type="FunFam" id="1.10.150.170:FF:000001">
    <property type="entry name" value="Ribosomal RNA small subunit methyltransferase H"/>
    <property type="match status" value="1"/>
</dbReference>
<dbReference type="Gene3D" id="1.10.150.170">
    <property type="entry name" value="Putative methyltransferase TM0872, insert domain"/>
    <property type="match status" value="1"/>
</dbReference>
<dbReference type="Gene3D" id="3.40.50.150">
    <property type="entry name" value="Vaccinia Virus protein VP39"/>
    <property type="match status" value="1"/>
</dbReference>
<dbReference type="HAMAP" id="MF_01007">
    <property type="entry name" value="16SrRNA_methyltr_H"/>
    <property type="match status" value="1"/>
</dbReference>
<dbReference type="InterPro" id="IPR002903">
    <property type="entry name" value="RsmH"/>
</dbReference>
<dbReference type="InterPro" id="IPR023397">
    <property type="entry name" value="SAM-dep_MeTrfase_MraW_recog"/>
</dbReference>
<dbReference type="InterPro" id="IPR029063">
    <property type="entry name" value="SAM-dependent_MTases_sf"/>
</dbReference>
<dbReference type="NCBIfam" id="TIGR00006">
    <property type="entry name" value="16S rRNA (cytosine(1402)-N(4))-methyltransferase RsmH"/>
    <property type="match status" value="1"/>
</dbReference>
<dbReference type="PANTHER" id="PTHR11265:SF0">
    <property type="entry name" value="12S RRNA N4-METHYLCYTIDINE METHYLTRANSFERASE"/>
    <property type="match status" value="1"/>
</dbReference>
<dbReference type="PANTHER" id="PTHR11265">
    <property type="entry name" value="S-ADENOSYL-METHYLTRANSFERASE MRAW"/>
    <property type="match status" value="1"/>
</dbReference>
<dbReference type="Pfam" id="PF01795">
    <property type="entry name" value="Methyltransf_5"/>
    <property type="match status" value="1"/>
</dbReference>
<dbReference type="PIRSF" id="PIRSF004486">
    <property type="entry name" value="MraW"/>
    <property type="match status" value="1"/>
</dbReference>
<dbReference type="SUPFAM" id="SSF81799">
    <property type="entry name" value="Putative methyltransferase TM0872, insert domain"/>
    <property type="match status" value="1"/>
</dbReference>
<dbReference type="SUPFAM" id="SSF53335">
    <property type="entry name" value="S-adenosyl-L-methionine-dependent methyltransferases"/>
    <property type="match status" value="1"/>
</dbReference>
<name>RSMH_STAAE</name>